<accession>Q8IY18</accession>
<accession>A6NM81</accession>
<accession>O60335</accession>
<accession>Q05D92</accession>
<accession>Q5VZ60</accession>
<accession>Q96SB9</accession>
<protein>
    <recommendedName>
        <fullName>Structural maintenance of chromosomes protein 5</fullName>
        <shortName>SMC protein 5</shortName>
        <shortName>SMC-5</shortName>
        <shortName>hSMC5</shortName>
    </recommendedName>
</protein>
<gene>
    <name type="primary">SMC5</name>
    <name type="synonym">KIAA0594</name>
    <name type="synonym">SMC5L1</name>
</gene>
<feature type="chain" id="PRO_0000270951" description="Structural maintenance of chromosomes protein 5">
    <location>
        <begin position="1"/>
        <end position="1101"/>
    </location>
</feature>
<feature type="region of interest" description="Disordered" evidence="4">
    <location>
        <begin position="1"/>
        <end position="43"/>
    </location>
</feature>
<feature type="region of interest" description="Flexible hinge">
    <location>
        <begin position="446"/>
        <end position="646"/>
    </location>
</feature>
<feature type="coiled-coil region" evidence="3">
    <location>
        <begin position="207"/>
        <end position="445"/>
    </location>
</feature>
<feature type="coiled-coil region" evidence="3">
    <location>
        <begin position="647"/>
        <end position="828"/>
    </location>
</feature>
<feature type="coiled-coil region" evidence="3">
    <location>
        <begin position="888"/>
        <end position="927"/>
    </location>
</feature>
<feature type="compositionally biased region" description="Low complexity" evidence="4">
    <location>
        <begin position="1"/>
        <end position="17"/>
    </location>
</feature>
<feature type="binding site" evidence="3">
    <location>
        <begin position="80"/>
        <end position="87"/>
    </location>
    <ligand>
        <name>ATP</name>
        <dbReference type="ChEBI" id="CHEBI:30616"/>
    </ligand>
</feature>
<feature type="modified residue" description="Phosphoserine" evidence="21">
    <location>
        <position position="25"/>
    </location>
</feature>
<feature type="modified residue" description="Phosphoserine" evidence="19 20 21 22">
    <location>
        <position position="35"/>
    </location>
</feature>
<feature type="sequence variant" id="VAR_029824" description="In dbSNP:rs1180116." evidence="5 6 17">
    <original>V</original>
    <variation>I</variation>
    <location>
        <position position="306"/>
    </location>
</feature>
<feature type="sequence variant" id="VAR_029825" description="In dbSNP:rs1180117." evidence="5 6">
    <original>C</original>
    <variation>R</variation>
    <location>
        <position position="308"/>
    </location>
</feature>
<feature type="sequence variant" id="VAR_087971" description="In ATELS2; loss-of-function variant; unable to rescue microcephaly and aberrant craniofacial patterning in zebrafish lacking SMC5; does not relocalize efficiently to sites of laser irradiation-induced DNA damage; loss of interaction with SLF2 and NSMCE2; severely decreased interaction with SMC6." evidence="15">
    <location>
        <position position="372"/>
    </location>
</feature>
<feature type="sequence variant" id="VAR_087972" description="In ATELS2; loss-of-function variant; unable to rescue microcephaly and aberrant craniofacial patterning in zebrafish lacking SMC5; loss of interaction with SLF2, SMC6 and NSMCE2." evidence="15">
    <location>
        <begin position="425"/>
        <end position="1101"/>
    </location>
</feature>
<feature type="sequence variant" id="VAR_061869" description="In dbSNP:rs11142365.">
    <original>H</original>
    <variation>R</variation>
    <location>
        <position position="682"/>
    </location>
</feature>
<feature type="sequence variant" id="VAR_087973" description="In ATELS2; loss-of-function variant; unable to rescue microcephaly and aberrant craniofacial patterning in zebrafish lacking SMC5; does not relocalize efficiently to sites of laser irradiation-induced DNA damage; no effect on interaction with SLF2, SMC6 and NSMCE2." evidence="15">
    <original>H</original>
    <variation>D</variation>
    <location>
        <position position="990"/>
    </location>
</feature>
<comment type="function">
    <text evidence="8 9 11 13">Core component of the SMC5-SMC6 complex, a complex involved in repair of DNA double-strand breaks by homologous recombination. The complex may promote sister chromatid homologous recombination by recruiting the SMC1-SMC3 cohesin complex to double-strand breaks. The complex is required for telomere maintenance via recombination in ALT (alternative lengthening of telomeres) cell lines and mediates sumoylation of shelterin complex (telosome) components which is proposed to lead to shelterin complex disassembly in ALT-associated PML bodies (APBs). Required for recruitment of telomeres to PML nuclear bodies. Required for sister chromatid cohesion during prometaphase and mitotic progression; the function seems to be independent of SMC6. SMC5-SMC6 complex may prevent transcription of episomal DNA, such as circular viral DNA genome (PubMed:26983541).</text>
</comment>
<comment type="subunit">
    <text evidence="5 7 10 12 15">Forms a heterodimer with SMC6 (PubMed:11408570). Component of the SMC5-SMC6 complex which consists at least of SMC5, SMC6, NSMCE2, NSMCE1, NSMCE4A or EID3 and NSMCE3 (PubMed:18086888). Interacts with NSMCE2 (PubMed:16055714, PubMed:36333305). Interacts with SLF2; this interaction induces an association of the SLF1-SLF2 complex with the SMC5-SMC6 complex (PubMed:25931565, PubMed:36333305). Interacts with RAD18; this interaction is increased in a SLF1 or SLF2-dependent manner (PubMed:25931565).</text>
</comment>
<comment type="subunit">
    <text evidence="13">(Microbial infection) SMC5-SMC6 complex interacts with Hepatitis B X protein.</text>
</comment>
<comment type="subunit">
    <text evidence="14">(Microbial infection) Interacts with human herpesvirus 8 (KSHV) protein RTA/ORF50; this interaction targets the SMC5-SMC6 complex for proteasomal degradation.</text>
</comment>
<comment type="interaction">
    <interactant intactId="EBI-605405">
        <id>Q8IY18</id>
    </interactant>
    <interactant intactId="EBI-11988027">
        <id>Q9NRI5-2</id>
        <label>DISC1</label>
    </interactant>
    <organismsDiffer>false</organismsDiffer>
    <experiments>3</experiments>
</comment>
<comment type="interaction">
    <interactant intactId="EBI-605405">
        <id>Q8IY18</id>
    </interactant>
    <interactant intactId="EBI-744483">
        <id>Q8N140</id>
        <label>EID3</label>
    </interactant>
    <organismsDiffer>false</organismsDiffer>
    <experiments>5</experiments>
</comment>
<comment type="interaction">
    <interactant intactId="EBI-605405">
        <id>Q8IY18</id>
    </interactant>
    <interactant intactId="EBI-2682240">
        <id>Q8IX21</id>
        <label>SLF2</label>
    </interactant>
    <organismsDiffer>false</organismsDiffer>
    <experiments>4</experiments>
</comment>
<comment type="interaction">
    <interactant intactId="EBI-605405">
        <id>Q8IY18</id>
    </interactant>
    <interactant intactId="EBI-605415">
        <id>Q96SB8</id>
        <label>SMC6</label>
    </interactant>
    <organismsDiffer>false</organismsDiffer>
    <experiments>7</experiments>
</comment>
<comment type="subcellular location">
    <subcellularLocation>
        <location evidence="5 12 14">Nucleus</location>
    </subcellularLocation>
    <subcellularLocation>
        <location evidence="2">Chromosome</location>
    </subcellularLocation>
    <subcellularLocation>
        <location evidence="9 16">Nucleus</location>
        <location evidence="9 16">PML body</location>
    </subcellularLocation>
    <subcellularLocation>
        <location evidence="9">Chromosome</location>
        <location evidence="9">Telomere</location>
    </subcellularLocation>
    <text evidence="2 12">Associates with chromatin (PubMed:25931565). Colocalizes with SMC6 on the X-Y chromosome pair within the sex vesicle during late pachytene/diplotene (By similarity). Localizes to PML nuclear bodies in ALT cell lines (PubMed:17589526). Accumulates with RAD18 and the SLF1-SLF2 complex at replication-coupled DNA interstrand repair and DNA double-strand breaks (DSBs) sites on chromatin in a ubiquitin-dependent manner (PubMed:25931565).</text>
</comment>
<comment type="tissue specificity">
    <text evidence="5">Widely expressed (PubMed:11408570). Strongly expressed in testis (PubMed:11408570).</text>
</comment>
<comment type="domain">
    <text evidence="1">The flexible hinge domain, which separates the large intramolecular coiled coil regions, allows the heterotypic interaction with the corresponding domain of SMC6, forming a V-shaped heterodimer.</text>
</comment>
<comment type="PTM">
    <text evidence="10">Sumoylated.</text>
</comment>
<comment type="PTM">
    <text evidence="10">Ubiquitinated.</text>
</comment>
<comment type="PTM">
    <text evidence="13">(Microbial infection) SMC5-SMC6 complex is degraded by the activity of Hepatitis B X protein.</text>
</comment>
<comment type="disease" evidence="15">
    <disease id="DI-06583">
        <name>Atelis syndrome 2</name>
        <acronym>ATELS2</acronym>
        <description>A form of Atelis syndrome, an autosomal recessive neurodevelopmental disorder characterized by mild to severe developmental delay, learning difficulties, microcephaly, and growth restriction with short stature. Additional features include anemia, skin hyperpigmentation, ocular anomalies, congenital heart defects, and mild skeletal abnormalities. Death in childhood may occur. Patient cells show spontaneous chromosome breakage and chromosomal anomalies, hallmarked by segmented and dicentric chromosomes and mosaic variegated hyperploidy.</description>
        <dbReference type="MIM" id="620185"/>
    </disease>
    <text>The disease is caused by variants affecting the gene represented in this entry.</text>
</comment>
<comment type="similarity">
    <text evidence="18">Belongs to the SMC family. SMC5 subfamily.</text>
</comment>
<comment type="sequence caution" evidence="18">
    <conflict type="miscellaneous discrepancy">
        <sequence resource="EMBL-CDS" id="AAH17666"/>
    </conflict>
    <text>Contaminating sequence. Potential poly-A sequence.</text>
</comment>
<dbReference type="EMBL" id="AJ310550">
    <property type="protein sequence ID" value="CAC39247.1"/>
    <property type="molecule type" value="mRNA"/>
</dbReference>
<dbReference type="EMBL" id="AB011166">
    <property type="protein sequence ID" value="BAA25520.2"/>
    <property type="molecule type" value="mRNA"/>
</dbReference>
<dbReference type="EMBL" id="AL162390">
    <property type="status" value="NOT_ANNOTATED_CDS"/>
    <property type="molecule type" value="Genomic_DNA"/>
</dbReference>
<dbReference type="EMBL" id="BC017666">
    <property type="protein sequence ID" value="AAH17666.1"/>
    <property type="status" value="ALT_SEQ"/>
    <property type="molecule type" value="mRNA"/>
</dbReference>
<dbReference type="EMBL" id="BC038225">
    <property type="protein sequence ID" value="AAH38225.1"/>
    <property type="molecule type" value="mRNA"/>
</dbReference>
<dbReference type="CCDS" id="CCDS6632.1"/>
<dbReference type="RefSeq" id="NP_055925.2">
    <property type="nucleotide sequence ID" value="NM_015110.4"/>
</dbReference>
<dbReference type="SMR" id="Q8IY18"/>
<dbReference type="BioGRID" id="116754">
    <property type="interactions" value="1004"/>
</dbReference>
<dbReference type="ComplexPortal" id="CPX-5992">
    <property type="entry name" value="SMC5-SMC6 SUMO ligase complex, EID3 variant"/>
</dbReference>
<dbReference type="ComplexPortal" id="CPX-6086">
    <property type="entry name" value="SMC5-SMC6 SUMO ligase complex, NSE4EA variant"/>
</dbReference>
<dbReference type="CORUM" id="Q8IY18"/>
<dbReference type="FunCoup" id="Q8IY18">
    <property type="interactions" value="3458"/>
</dbReference>
<dbReference type="IntAct" id="Q8IY18">
    <property type="interactions" value="117"/>
</dbReference>
<dbReference type="MINT" id="Q8IY18"/>
<dbReference type="STRING" id="9606.ENSP00000354957"/>
<dbReference type="GlyGen" id="Q8IY18">
    <property type="glycosylation" value="3 sites, 1 N-linked glycan (1 site), 1 O-linked glycan (1 site)"/>
</dbReference>
<dbReference type="iPTMnet" id="Q8IY18"/>
<dbReference type="MetOSite" id="Q8IY18"/>
<dbReference type="PhosphoSitePlus" id="Q8IY18"/>
<dbReference type="BioMuta" id="SMC5"/>
<dbReference type="DMDM" id="122070387"/>
<dbReference type="jPOST" id="Q8IY18"/>
<dbReference type="MassIVE" id="Q8IY18"/>
<dbReference type="PaxDb" id="9606-ENSP00000354957"/>
<dbReference type="PeptideAtlas" id="Q8IY18"/>
<dbReference type="ProteomicsDB" id="71087"/>
<dbReference type="Pumba" id="Q8IY18"/>
<dbReference type="Antibodypedia" id="26866">
    <property type="antibodies" value="196 antibodies from 28 providers"/>
</dbReference>
<dbReference type="DNASU" id="23137"/>
<dbReference type="Ensembl" id="ENST00000361138.7">
    <property type="protein sequence ID" value="ENSP00000354957.5"/>
    <property type="gene ID" value="ENSG00000198887.9"/>
</dbReference>
<dbReference type="GeneID" id="23137"/>
<dbReference type="KEGG" id="hsa:23137"/>
<dbReference type="MANE-Select" id="ENST00000361138.7">
    <property type="protein sequence ID" value="ENSP00000354957.5"/>
    <property type="RefSeq nucleotide sequence ID" value="NM_015110.4"/>
    <property type="RefSeq protein sequence ID" value="NP_055925.2"/>
</dbReference>
<dbReference type="UCSC" id="uc004ahr.3">
    <property type="organism name" value="human"/>
</dbReference>
<dbReference type="AGR" id="HGNC:20465"/>
<dbReference type="CTD" id="23137"/>
<dbReference type="DisGeNET" id="23137"/>
<dbReference type="GeneCards" id="SMC5"/>
<dbReference type="HGNC" id="HGNC:20465">
    <property type="gene designation" value="SMC5"/>
</dbReference>
<dbReference type="HPA" id="ENSG00000198887">
    <property type="expression patterns" value="Low tissue specificity"/>
</dbReference>
<dbReference type="MalaCards" id="SMC5"/>
<dbReference type="MIM" id="609386">
    <property type="type" value="gene"/>
</dbReference>
<dbReference type="MIM" id="620185">
    <property type="type" value="phenotype"/>
</dbReference>
<dbReference type="neXtProt" id="NX_Q8IY18"/>
<dbReference type="OpenTargets" id="ENSG00000198887"/>
<dbReference type="PharmGKB" id="PA134993662"/>
<dbReference type="VEuPathDB" id="HostDB:ENSG00000198887"/>
<dbReference type="eggNOG" id="KOG0979">
    <property type="taxonomic scope" value="Eukaryota"/>
</dbReference>
<dbReference type="GeneTree" id="ENSGT00550000074816"/>
<dbReference type="HOGENOM" id="CLU_004969_1_0_1"/>
<dbReference type="InParanoid" id="Q8IY18"/>
<dbReference type="OMA" id="RFWTSQP"/>
<dbReference type="OrthoDB" id="10254973at2759"/>
<dbReference type="PAN-GO" id="Q8IY18">
    <property type="GO annotations" value="4 GO annotations based on evolutionary models"/>
</dbReference>
<dbReference type="PhylomeDB" id="Q8IY18"/>
<dbReference type="TreeFam" id="TF105708"/>
<dbReference type="PathwayCommons" id="Q8IY18"/>
<dbReference type="Reactome" id="R-HSA-3108214">
    <property type="pathway name" value="SUMOylation of DNA damage response and repair proteins"/>
</dbReference>
<dbReference type="SignaLink" id="Q8IY18"/>
<dbReference type="SIGNOR" id="Q8IY18"/>
<dbReference type="BioGRID-ORCS" id="23137">
    <property type="hits" value="599 hits in 1168 CRISPR screens"/>
</dbReference>
<dbReference type="CD-CODE" id="B5B9A610">
    <property type="entry name" value="PML body"/>
</dbReference>
<dbReference type="ChiTaRS" id="SMC5">
    <property type="organism name" value="human"/>
</dbReference>
<dbReference type="GeneWiki" id="SMC5"/>
<dbReference type="GenomeRNAi" id="23137"/>
<dbReference type="Pharos" id="Q8IY18">
    <property type="development level" value="Tbio"/>
</dbReference>
<dbReference type="PRO" id="PR:Q8IY18"/>
<dbReference type="Proteomes" id="UP000005640">
    <property type="component" value="Chromosome 9"/>
</dbReference>
<dbReference type="RNAct" id="Q8IY18">
    <property type="molecule type" value="protein"/>
</dbReference>
<dbReference type="Bgee" id="ENSG00000198887">
    <property type="expression patterns" value="Expressed in sural nerve and 196 other cell types or tissues"/>
</dbReference>
<dbReference type="GO" id="GO:0030054">
    <property type="term" value="C:cell junction"/>
    <property type="evidence" value="ECO:0000314"/>
    <property type="project" value="HPA"/>
</dbReference>
<dbReference type="GO" id="GO:0000775">
    <property type="term" value="C:chromosome, centromeric region"/>
    <property type="evidence" value="ECO:0007669"/>
    <property type="project" value="Ensembl"/>
</dbReference>
<dbReference type="GO" id="GO:0000781">
    <property type="term" value="C:chromosome, telomeric region"/>
    <property type="evidence" value="ECO:0000314"/>
    <property type="project" value="UniProtKB"/>
</dbReference>
<dbReference type="GO" id="GO:0005737">
    <property type="term" value="C:cytoplasm"/>
    <property type="evidence" value="ECO:0007669"/>
    <property type="project" value="Ensembl"/>
</dbReference>
<dbReference type="GO" id="GO:0035061">
    <property type="term" value="C:interchromatin granule"/>
    <property type="evidence" value="ECO:0000314"/>
    <property type="project" value="UniProtKB"/>
</dbReference>
<dbReference type="GO" id="GO:0016607">
    <property type="term" value="C:nuclear speck"/>
    <property type="evidence" value="ECO:0000314"/>
    <property type="project" value="HPA"/>
</dbReference>
<dbReference type="GO" id="GO:0005654">
    <property type="term" value="C:nucleoplasm"/>
    <property type="evidence" value="ECO:0000304"/>
    <property type="project" value="Reactome"/>
</dbReference>
<dbReference type="GO" id="GO:0005634">
    <property type="term" value="C:nucleus"/>
    <property type="evidence" value="ECO:0000314"/>
    <property type="project" value="UniProtKB"/>
</dbReference>
<dbReference type="GO" id="GO:0016605">
    <property type="term" value="C:PML body"/>
    <property type="evidence" value="ECO:0000314"/>
    <property type="project" value="UniProtKB"/>
</dbReference>
<dbReference type="GO" id="GO:0000803">
    <property type="term" value="C:sex chromosome"/>
    <property type="evidence" value="ECO:0000250"/>
    <property type="project" value="UniProtKB"/>
</dbReference>
<dbReference type="GO" id="GO:0035861">
    <property type="term" value="C:site of double-strand break"/>
    <property type="evidence" value="ECO:0000314"/>
    <property type="project" value="UniProtKB"/>
</dbReference>
<dbReference type="GO" id="GO:0030915">
    <property type="term" value="C:Smc5-Smc6 complex"/>
    <property type="evidence" value="ECO:0000314"/>
    <property type="project" value="UniProtKB"/>
</dbReference>
<dbReference type="GO" id="GO:0005524">
    <property type="term" value="F:ATP binding"/>
    <property type="evidence" value="ECO:0007669"/>
    <property type="project" value="UniProtKB-KW"/>
</dbReference>
<dbReference type="GO" id="GO:0016887">
    <property type="term" value="F:ATP hydrolysis activity"/>
    <property type="evidence" value="ECO:0007669"/>
    <property type="project" value="InterPro"/>
</dbReference>
<dbReference type="GO" id="GO:0000217">
    <property type="term" value="F:DNA secondary structure binding"/>
    <property type="evidence" value="ECO:0000314"/>
    <property type="project" value="UniProt"/>
</dbReference>
<dbReference type="GO" id="GO:0003697">
    <property type="term" value="F:single-stranded DNA binding"/>
    <property type="evidence" value="ECO:0000318"/>
    <property type="project" value="GO_Central"/>
</dbReference>
<dbReference type="GO" id="GO:0051301">
    <property type="term" value="P:cell division"/>
    <property type="evidence" value="ECO:0007669"/>
    <property type="project" value="UniProtKB-KW"/>
</dbReference>
<dbReference type="GO" id="GO:0090398">
    <property type="term" value="P:cellular senescence"/>
    <property type="evidence" value="ECO:0000315"/>
    <property type="project" value="UniProtKB"/>
</dbReference>
<dbReference type="GO" id="GO:0140588">
    <property type="term" value="P:chromatin looping"/>
    <property type="evidence" value="ECO:0000303"/>
    <property type="project" value="ComplexPortal"/>
</dbReference>
<dbReference type="GO" id="GO:0030261">
    <property type="term" value="P:chromosome condensation"/>
    <property type="evidence" value="ECO:0007669"/>
    <property type="project" value="Ensembl"/>
</dbReference>
<dbReference type="GO" id="GO:0007059">
    <property type="term" value="P:chromosome segregation"/>
    <property type="evidence" value="ECO:0007669"/>
    <property type="project" value="Ensembl"/>
</dbReference>
<dbReference type="GO" id="GO:0006974">
    <property type="term" value="P:DNA damage response"/>
    <property type="evidence" value="ECO:0000314"/>
    <property type="project" value="UniProtKB"/>
</dbReference>
<dbReference type="GO" id="GO:0000724">
    <property type="term" value="P:double-strand break repair via homologous recombination"/>
    <property type="evidence" value="ECO:0000315"/>
    <property type="project" value="UniProtKB"/>
</dbReference>
<dbReference type="GO" id="GO:0044772">
    <property type="term" value="P:mitotic cell cycle phase transition"/>
    <property type="evidence" value="ECO:0007669"/>
    <property type="project" value="Ensembl"/>
</dbReference>
<dbReference type="GO" id="GO:0044828">
    <property type="term" value="P:negative regulation by host of viral genome replication"/>
    <property type="evidence" value="ECO:0000314"/>
    <property type="project" value="UniProt"/>
</dbReference>
<dbReference type="GO" id="GO:0051984">
    <property type="term" value="P:positive regulation of chromosome segregation"/>
    <property type="evidence" value="ECO:0000315"/>
    <property type="project" value="UniProtKB"/>
</dbReference>
<dbReference type="GO" id="GO:0034184">
    <property type="term" value="P:positive regulation of maintenance of mitotic sister chromatid cohesion"/>
    <property type="evidence" value="ECO:0000315"/>
    <property type="project" value="UniProtKB"/>
</dbReference>
<dbReference type="GO" id="GO:0071459">
    <property type="term" value="P:protein localization to chromosome, centromeric region"/>
    <property type="evidence" value="ECO:0007669"/>
    <property type="project" value="Ensembl"/>
</dbReference>
<dbReference type="GO" id="GO:0016925">
    <property type="term" value="P:protein sumoylation"/>
    <property type="evidence" value="ECO:0000303"/>
    <property type="project" value="ComplexPortal"/>
</dbReference>
<dbReference type="GO" id="GO:0032204">
    <property type="term" value="P:regulation of telomere maintenance"/>
    <property type="evidence" value="ECO:0000303"/>
    <property type="project" value="ComplexPortal"/>
</dbReference>
<dbReference type="GO" id="GO:0019827">
    <property type="term" value="P:stem cell population maintenance"/>
    <property type="evidence" value="ECO:0007669"/>
    <property type="project" value="Ensembl"/>
</dbReference>
<dbReference type="GO" id="GO:0000722">
    <property type="term" value="P:telomere maintenance via recombination"/>
    <property type="evidence" value="ECO:0000315"/>
    <property type="project" value="UniProtKB"/>
</dbReference>
<dbReference type="FunFam" id="3.40.50.300:FF:000793">
    <property type="entry name" value="Structural maintenance of chromosomes protein 5"/>
    <property type="match status" value="1"/>
</dbReference>
<dbReference type="FunFam" id="3.40.50.300:FF:001434">
    <property type="entry name" value="Structural maintenance of chromosomes protein 5"/>
    <property type="match status" value="1"/>
</dbReference>
<dbReference type="Gene3D" id="3.40.50.300">
    <property type="entry name" value="P-loop containing nucleotide triphosphate hydrolases"/>
    <property type="match status" value="2"/>
</dbReference>
<dbReference type="InterPro" id="IPR027417">
    <property type="entry name" value="P-loop_NTPase"/>
</dbReference>
<dbReference type="InterPro" id="IPR038729">
    <property type="entry name" value="Rad50/SbcC_AAA"/>
</dbReference>
<dbReference type="PANTHER" id="PTHR45916">
    <property type="entry name" value="STRUCTURAL MAINTENANCE OF CHROMOSOMES PROTEIN 5"/>
    <property type="match status" value="1"/>
</dbReference>
<dbReference type="PANTHER" id="PTHR45916:SF1">
    <property type="entry name" value="STRUCTURAL MAINTENANCE OF CHROMOSOMES PROTEIN 5"/>
    <property type="match status" value="1"/>
</dbReference>
<dbReference type="Pfam" id="PF13476">
    <property type="entry name" value="AAA_23"/>
    <property type="match status" value="1"/>
</dbReference>
<dbReference type="SUPFAM" id="SSF52540">
    <property type="entry name" value="P-loop containing nucleoside triphosphate hydrolases"/>
    <property type="match status" value="1"/>
</dbReference>
<organism>
    <name type="scientific">Homo sapiens</name>
    <name type="common">Human</name>
    <dbReference type="NCBI Taxonomy" id="9606"/>
    <lineage>
        <taxon>Eukaryota</taxon>
        <taxon>Metazoa</taxon>
        <taxon>Chordata</taxon>
        <taxon>Craniata</taxon>
        <taxon>Vertebrata</taxon>
        <taxon>Euteleostomi</taxon>
        <taxon>Mammalia</taxon>
        <taxon>Eutheria</taxon>
        <taxon>Euarchontoglires</taxon>
        <taxon>Primates</taxon>
        <taxon>Haplorrhini</taxon>
        <taxon>Catarrhini</taxon>
        <taxon>Hominidae</taxon>
        <taxon>Homo</taxon>
    </lineage>
</organism>
<name>SMC5_HUMAN</name>
<sequence>MATPSKKTSTPSPQPSKRALPRDPSSEVPSKRKNSAPQLPLLQSSGPFVEGSIVRISMENFLTYDICEVSPGPHLNMIVGANGTGKSSIVCAICLGLAGKPAFMGRADKVGFFVKRGCSRGMVEIELFRASGNLVITREIDVAKNQSFWFINKKSTTQKIVEEKVAALNIQVGNLCQFLPQDKVGEFAKLSKIELLEATEKSIGPPEMHKYHCELKNLREKEKQLETSCKEKTEYLQKMVQRNERYKQDVERFYERKRHLDLIEMLEAKRPWVEYENVRQEYEEVKLVRDRVKEEVRKLKEGQIPVTCRIEEMENERHNLEARIKEKATDIKEASQKCKQKQDVIERKDKHIEELQQALIVKQNEELDRQRRIGNTRKMIEDLQNELKTTENCENLQPQIDAITNDLRRIQDEKALCEGEIIDKRRERETLEKEKKSVDDHIVRFDNLMNQKEDKLRQRFRDTYDAVLWLRNNRDKFKQRVCEPIMLTINMKDNKNAKYIENHIPSNDLRAFVFESQEDMEVFLKEVRDNKKLRVNAVIAPKSSYADKAPSRSLNELKQYGFFSYLRELFDAPDPVMSYLCCQYHIHEVPVGTEKTRERIERVIQETRLKQIYTAEEKYVVKTSFYSNKVISSNTSLKVAQFLTVTVDLEQRRHLEEQLKEIHRKLQAVDSGLIALRETSKHLEHKDNELRQKKKELLERKTKKRQLEQKISSKLGSLKLMEQDTCNLEEEERKASTKIKEINVQKAKLVTELTNLIKICTSLHIQKVDLILQNTTVISEKNKLESDYMAASSQLRLTEQHFIELDENRQRLLQKCKELMKRARQVCNLGAEQTLPQEYQTQVPTIPNGHNSSLPMVFQDLPNTLDEIDALLTEERSRASCFTGLNPTIVQEYTKREEEIEQLTEELKGKKVELDQYRENISQVKERWLNPLKELVEKINEKFSNFFSSMQCAGEVDLHTENEEDYDKYGIRIRVKFRSSTQLHELTPHHQSGGERSVSTMLYLMALQELNRCPFRVVDEINQGMDPINERRVFEMVVNTACKENTSQYFFITPKLLQNLPYSEKMTVLFVYNGPHMLEPNTWNLKAFQRRRRRITFTQPS</sequence>
<proteinExistence type="evidence at protein level"/>
<reference key="1">
    <citation type="journal article" date="2001" name="Mol. Biol. Cell">
        <title>Characterization of a novel human SMC heterodimer homologous to the Schizosaccharomyces pombe Rad18/Spr18 complex.</title>
        <authorList>
            <person name="Taylor E.M."/>
            <person name="Moghraby J.S."/>
            <person name="Lees J.H."/>
            <person name="Smit B."/>
            <person name="Moens P.B."/>
            <person name="Lehmann A.R."/>
        </authorList>
    </citation>
    <scope>NUCLEOTIDE SEQUENCE [MRNA]</scope>
    <scope>INTERACTION WITH SMC6</scope>
    <scope>SUBCELLULAR LOCATION</scope>
    <scope>TISSUE SPECIFICITY</scope>
    <scope>VARIANTS ILE-306 AND ARG-308</scope>
</reference>
<reference key="2">
    <citation type="journal article" date="1998" name="DNA Res.">
        <title>Prediction of the coding sequences of unidentified human genes. IX. The complete sequences of 100 new cDNA clones from brain which can code for large proteins in vitro.</title>
        <authorList>
            <person name="Nagase T."/>
            <person name="Ishikawa K."/>
            <person name="Miyajima N."/>
            <person name="Tanaka A."/>
            <person name="Kotani H."/>
            <person name="Nomura N."/>
            <person name="Ohara O."/>
        </authorList>
    </citation>
    <scope>NUCLEOTIDE SEQUENCE [LARGE SCALE MRNA]</scope>
    <scope>VARIANT ILE-306</scope>
    <source>
        <tissue>Brain</tissue>
    </source>
</reference>
<reference key="3">
    <citation type="journal article" date="2002" name="DNA Res.">
        <title>Construction of expression-ready cDNA clones for KIAA genes: manual curation of 330 KIAA cDNA clones.</title>
        <authorList>
            <person name="Nakajima D."/>
            <person name="Okazaki N."/>
            <person name="Yamakawa H."/>
            <person name="Kikuno R."/>
            <person name="Ohara O."/>
            <person name="Nagase T."/>
        </authorList>
    </citation>
    <scope>SEQUENCE REVISION</scope>
</reference>
<reference key="4">
    <citation type="journal article" date="2004" name="Nature">
        <title>DNA sequence and analysis of human chromosome 9.</title>
        <authorList>
            <person name="Humphray S.J."/>
            <person name="Oliver K."/>
            <person name="Hunt A.R."/>
            <person name="Plumb R.W."/>
            <person name="Loveland J.E."/>
            <person name="Howe K.L."/>
            <person name="Andrews T.D."/>
            <person name="Searle S."/>
            <person name="Hunt S.E."/>
            <person name="Scott C.E."/>
            <person name="Jones M.C."/>
            <person name="Ainscough R."/>
            <person name="Almeida J.P."/>
            <person name="Ambrose K.D."/>
            <person name="Ashwell R.I.S."/>
            <person name="Babbage A.K."/>
            <person name="Babbage S."/>
            <person name="Bagguley C.L."/>
            <person name="Bailey J."/>
            <person name="Banerjee R."/>
            <person name="Barker D.J."/>
            <person name="Barlow K.F."/>
            <person name="Bates K."/>
            <person name="Beasley H."/>
            <person name="Beasley O."/>
            <person name="Bird C.P."/>
            <person name="Bray-Allen S."/>
            <person name="Brown A.J."/>
            <person name="Brown J.Y."/>
            <person name="Burford D."/>
            <person name="Burrill W."/>
            <person name="Burton J."/>
            <person name="Carder C."/>
            <person name="Carter N.P."/>
            <person name="Chapman J.C."/>
            <person name="Chen Y."/>
            <person name="Clarke G."/>
            <person name="Clark S.Y."/>
            <person name="Clee C.M."/>
            <person name="Clegg S."/>
            <person name="Collier R.E."/>
            <person name="Corby N."/>
            <person name="Crosier M."/>
            <person name="Cummings A.T."/>
            <person name="Davies J."/>
            <person name="Dhami P."/>
            <person name="Dunn M."/>
            <person name="Dutta I."/>
            <person name="Dyer L.W."/>
            <person name="Earthrowl M.E."/>
            <person name="Faulkner L."/>
            <person name="Fleming C.J."/>
            <person name="Frankish A."/>
            <person name="Frankland J.A."/>
            <person name="French L."/>
            <person name="Fricker D.G."/>
            <person name="Garner P."/>
            <person name="Garnett J."/>
            <person name="Ghori J."/>
            <person name="Gilbert J.G.R."/>
            <person name="Glison C."/>
            <person name="Grafham D.V."/>
            <person name="Gribble S."/>
            <person name="Griffiths C."/>
            <person name="Griffiths-Jones S."/>
            <person name="Grocock R."/>
            <person name="Guy J."/>
            <person name="Hall R.E."/>
            <person name="Hammond S."/>
            <person name="Harley J.L."/>
            <person name="Harrison E.S.I."/>
            <person name="Hart E.A."/>
            <person name="Heath P.D."/>
            <person name="Henderson C.D."/>
            <person name="Hopkins B.L."/>
            <person name="Howard P.J."/>
            <person name="Howden P.J."/>
            <person name="Huckle E."/>
            <person name="Johnson C."/>
            <person name="Johnson D."/>
            <person name="Joy A.A."/>
            <person name="Kay M."/>
            <person name="Keenan S."/>
            <person name="Kershaw J.K."/>
            <person name="Kimberley A.M."/>
            <person name="King A."/>
            <person name="Knights A."/>
            <person name="Laird G.K."/>
            <person name="Langford C."/>
            <person name="Lawlor S."/>
            <person name="Leongamornlert D.A."/>
            <person name="Leversha M."/>
            <person name="Lloyd C."/>
            <person name="Lloyd D.M."/>
            <person name="Lovell J."/>
            <person name="Martin S."/>
            <person name="Mashreghi-Mohammadi M."/>
            <person name="Matthews L."/>
            <person name="McLaren S."/>
            <person name="McLay K.E."/>
            <person name="McMurray A."/>
            <person name="Milne S."/>
            <person name="Nickerson T."/>
            <person name="Nisbett J."/>
            <person name="Nordsiek G."/>
            <person name="Pearce A.V."/>
            <person name="Peck A.I."/>
            <person name="Porter K.M."/>
            <person name="Pandian R."/>
            <person name="Pelan S."/>
            <person name="Phillimore B."/>
            <person name="Povey S."/>
            <person name="Ramsey Y."/>
            <person name="Rand V."/>
            <person name="Scharfe M."/>
            <person name="Sehra H.K."/>
            <person name="Shownkeen R."/>
            <person name="Sims S.K."/>
            <person name="Skuce C.D."/>
            <person name="Smith M."/>
            <person name="Steward C.A."/>
            <person name="Swarbreck D."/>
            <person name="Sycamore N."/>
            <person name="Tester J."/>
            <person name="Thorpe A."/>
            <person name="Tracey A."/>
            <person name="Tromans A."/>
            <person name="Thomas D.W."/>
            <person name="Wall M."/>
            <person name="Wallis J.M."/>
            <person name="West A.P."/>
            <person name="Whitehead S.L."/>
            <person name="Willey D.L."/>
            <person name="Williams S.A."/>
            <person name="Wilming L."/>
            <person name="Wray P.W."/>
            <person name="Young L."/>
            <person name="Ashurst J.L."/>
            <person name="Coulson A."/>
            <person name="Blocker H."/>
            <person name="Durbin R.M."/>
            <person name="Sulston J.E."/>
            <person name="Hubbard T."/>
            <person name="Jackson M.J."/>
            <person name="Bentley D.R."/>
            <person name="Beck S."/>
            <person name="Rogers J."/>
            <person name="Dunham I."/>
        </authorList>
    </citation>
    <scope>NUCLEOTIDE SEQUENCE [LARGE SCALE GENOMIC DNA]</scope>
</reference>
<reference key="5">
    <citation type="journal article" date="2004" name="Genome Res.">
        <title>The status, quality, and expansion of the NIH full-length cDNA project: the Mammalian Gene Collection (MGC).</title>
        <authorList>
            <consortium name="The MGC Project Team"/>
        </authorList>
    </citation>
    <scope>NUCLEOTIDE SEQUENCE [LARGE SCALE MRNA]</scope>
    <scope>VARIANTS ILE-306 AND ARG-308</scope>
    <source>
        <tissue>Mammary gland</tissue>
        <tissue>Uterus</tissue>
    </source>
</reference>
<reference key="6">
    <citation type="journal article" date="2005" name="Mol. Cell. Biol.">
        <title>Human MMS21/NSE2 is a SUMO ligase required for DNA repair.</title>
        <authorList>
            <person name="Potts P.R."/>
            <person name="Yu H."/>
        </authorList>
    </citation>
    <scope>INTERACTION WITH NSMCE2</scope>
</reference>
<reference key="7">
    <citation type="journal article" date="2006" name="EMBO J.">
        <title>Human SMC5/6 complex promotes sister chromatid homologous recombination by recruiting the SMC1/3 cohesin complex to double-strand breaks.</title>
        <authorList>
            <person name="Potts P.R."/>
            <person name="Porteus M.H."/>
            <person name="Yu H."/>
        </authorList>
    </citation>
    <scope>FUNCTION</scope>
</reference>
<reference key="8">
    <citation type="journal article" date="2007" name="Nat. Struct. Mol. Biol.">
        <title>The SMC5/6 complex maintains telomere length in ALT cancer cells through SUMOylation of telomere-binding proteins.</title>
        <authorList>
            <person name="Potts P.R."/>
            <person name="Yu H."/>
        </authorList>
    </citation>
    <scope>FUNCTION</scope>
    <scope>SUBCELLULAR LOCATION</scope>
</reference>
<reference key="9">
    <citation type="journal article" date="2008" name="Mol. Cell. Biol.">
        <title>Identification of the proteins, including MAGEG1, that make up the human SMC5-6 protein complex.</title>
        <authorList>
            <person name="Taylor E.M."/>
            <person name="Copsey A.C."/>
            <person name="Hudson J.J."/>
            <person name="Vidot S."/>
            <person name="Lehmann A.R."/>
        </authorList>
    </citation>
    <scope>SUMOYLATION</scope>
    <scope>UBIQUITINATION</scope>
    <scope>IDENTIFICATION IN THE SMC5-SMC6 COMPLEX</scope>
</reference>
<reference key="10">
    <citation type="journal article" date="2008" name="Proc. Natl. Acad. Sci. U.S.A.">
        <title>A quantitative atlas of mitotic phosphorylation.</title>
        <authorList>
            <person name="Dephoure N."/>
            <person name="Zhou C."/>
            <person name="Villen J."/>
            <person name="Beausoleil S.A."/>
            <person name="Bakalarski C.E."/>
            <person name="Elledge S.J."/>
            <person name="Gygi S.P."/>
        </authorList>
    </citation>
    <scope>PHOSPHORYLATION [LARGE SCALE ANALYSIS] AT SER-35</scope>
    <scope>IDENTIFICATION BY MASS SPECTROMETRY [LARGE SCALE ANALYSIS]</scope>
    <source>
        <tissue>Cervix carcinoma</tissue>
    </source>
</reference>
<reference key="11">
    <citation type="journal article" date="2009" name="Cell Cycle">
        <title>SMC5 and MMS21 are required for chromosome cohesion and mitotic progression.</title>
        <authorList>
            <person name="Behlke-Steinert S."/>
            <person name="Touat-Todeschini L."/>
            <person name="Skoufias D.A."/>
            <person name="Margolis R.L."/>
        </authorList>
    </citation>
    <scope>FUNCTION</scope>
</reference>
<reference key="12">
    <citation type="journal article" date="2009" name="Sci. Signal.">
        <title>Quantitative phosphoproteomic analysis of T cell receptor signaling reveals system-wide modulation of protein-protein interactions.</title>
        <authorList>
            <person name="Mayya V."/>
            <person name="Lundgren D.H."/>
            <person name="Hwang S.-I."/>
            <person name="Rezaul K."/>
            <person name="Wu L."/>
            <person name="Eng J.K."/>
            <person name="Rodionov V."/>
            <person name="Han D.K."/>
        </authorList>
    </citation>
    <scope>PHOSPHORYLATION [LARGE SCALE ANALYSIS] AT SER-35</scope>
    <scope>IDENTIFICATION BY MASS SPECTROMETRY [LARGE SCALE ANALYSIS]</scope>
    <source>
        <tissue>Leukemic T-cell</tissue>
    </source>
</reference>
<reference key="13">
    <citation type="journal article" date="2011" name="BMC Syst. Biol.">
        <title>Initial characterization of the human central proteome.</title>
        <authorList>
            <person name="Burkard T.R."/>
            <person name="Planyavsky M."/>
            <person name="Kaupe I."/>
            <person name="Breitwieser F.P."/>
            <person name="Buerckstuemmer T."/>
            <person name="Bennett K.L."/>
            <person name="Superti-Furga G."/>
            <person name="Colinge J."/>
        </authorList>
    </citation>
    <scope>IDENTIFICATION BY MASS SPECTROMETRY [LARGE SCALE ANALYSIS]</scope>
</reference>
<reference key="14">
    <citation type="journal article" date="2013" name="J. Proteome Res.">
        <title>Toward a comprehensive characterization of a human cancer cell phosphoproteome.</title>
        <authorList>
            <person name="Zhou H."/>
            <person name="Di Palma S."/>
            <person name="Preisinger C."/>
            <person name="Peng M."/>
            <person name="Polat A.N."/>
            <person name="Heck A.J."/>
            <person name="Mohammed S."/>
        </authorList>
    </citation>
    <scope>PHOSPHORYLATION [LARGE SCALE ANALYSIS] AT SER-25 AND SER-35</scope>
    <scope>IDENTIFICATION BY MASS SPECTROMETRY [LARGE SCALE ANALYSIS]</scope>
    <source>
        <tissue>Erythroleukemia</tissue>
    </source>
</reference>
<reference key="15">
    <citation type="journal article" date="2014" name="J. Proteomics">
        <title>An enzyme assisted RP-RPLC approach for in-depth analysis of human liver phosphoproteome.</title>
        <authorList>
            <person name="Bian Y."/>
            <person name="Song C."/>
            <person name="Cheng K."/>
            <person name="Dong M."/>
            <person name="Wang F."/>
            <person name="Huang J."/>
            <person name="Sun D."/>
            <person name="Wang L."/>
            <person name="Ye M."/>
            <person name="Zou H."/>
        </authorList>
    </citation>
    <scope>PHOSPHORYLATION [LARGE SCALE ANALYSIS] AT SER-35</scope>
    <scope>IDENTIFICATION BY MASS SPECTROMETRY [LARGE SCALE ANALYSIS]</scope>
    <source>
        <tissue>Liver</tissue>
    </source>
</reference>
<reference key="16">
    <citation type="journal article" date="2015" name="Science">
        <title>DNA repair. Proteomics reveals dynamic assembly of repair complexes during bypass of DNA cross-links.</title>
        <authorList>
            <person name="Raeschle M."/>
            <person name="Smeenk G."/>
            <person name="Hansen R.K."/>
            <person name="Temu T."/>
            <person name="Oka Y."/>
            <person name="Hein M.Y."/>
            <person name="Nagaraj N."/>
            <person name="Long D.T."/>
            <person name="Walter J.C."/>
            <person name="Hofmann K."/>
            <person name="Storchova Z."/>
            <person name="Cox J."/>
            <person name="Bekker-Jensen S."/>
            <person name="Mailand N."/>
            <person name="Mann M."/>
        </authorList>
    </citation>
    <scope>INTERACTION WITH RAD18 AND SLF2</scope>
    <scope>SUBCELLULAR LOCATION</scope>
    <scope>IDENTIFICATION BY MASS SPECTROMETRY</scope>
</reference>
<reference key="17">
    <citation type="journal article" date="2016" name="Nature">
        <title>Hepatitis B virus X protein identifies the Smc5/6 complex as a host restriction factor.</title>
        <authorList>
            <person name="Decorsiere A."/>
            <person name="Mueller H."/>
            <person name="van Breugel P.C."/>
            <person name="Abdul F."/>
            <person name="Gerossier L."/>
            <person name="Beran R.K."/>
            <person name="Livingston C.M."/>
            <person name="Niu C."/>
            <person name="Fletcher S.P."/>
            <person name="Hantz O."/>
            <person name="Strubin M."/>
        </authorList>
    </citation>
    <scope>FUNCTION</scope>
    <scope>DEGRADATION (MICROBIAL INFECTION)</scope>
    <scope>SUBUNIT (MICROBIAL INFECTION)</scope>
</reference>
<reference key="18">
    <citation type="journal article" date="2022" name="Elife">
        <title>The Nse5/6-like SIMC1-SLF2 complex localizes SMC5/6 to viral replication centers.</title>
        <authorList>
            <person name="Oravcova M."/>
            <person name="Nie M."/>
            <person name="Zilio N."/>
            <person name="Maeda S."/>
            <person name="Jami-Alahmadi Y."/>
            <person name="Lazzerini-Denchi E."/>
            <person name="Wohlschlegel J.A."/>
            <person name="Ulrich H.D."/>
            <person name="Otomo T."/>
            <person name="Boddy M.N."/>
        </authorList>
    </citation>
    <scope>SUBCELLULAR LOCATION</scope>
</reference>
<reference key="19">
    <citation type="journal article" date="2022" name="PLoS Pathog.">
        <title>KSHV RTA antagonizes SMC5/6 complex-induced viral chromatin compaction by hijacking the ubiquitin-proteasome system.</title>
        <authorList>
            <person name="Han C."/>
            <person name="Zhang D."/>
            <person name="Gui C."/>
            <person name="Huang L."/>
            <person name="Chang S."/>
            <person name="Dong L."/>
            <person name="Bai L."/>
            <person name="Wu S."/>
            <person name="Lan K."/>
        </authorList>
    </citation>
    <scope>INTERACTION WITH HUMAN HERPESVIRUS 8 PROTEIN RTA/ORF50 (MICROBIAL INFECTION)</scope>
    <scope>SUBCELLULAR LOCATION</scope>
</reference>
<reference key="20">
    <citation type="journal article" date="2022" name="Nat. Commun.">
        <title>Pathogenic variants in SLF2 and SMC5 cause segmented chromosomes and mosaic variegated hyperploidy.</title>
        <authorList>
            <person name="Grange L.J."/>
            <person name="Reynolds J.J."/>
            <person name="Ullah F."/>
            <person name="Isidor B."/>
            <person name="Shearer R.F."/>
            <person name="Latypova X."/>
            <person name="Baxley R.M."/>
            <person name="Oliver A.W."/>
            <person name="Ganesh A."/>
            <person name="Cooke S.L."/>
            <person name="Jhujh S.S."/>
            <person name="McNee G.S."/>
            <person name="Hollingworth R."/>
            <person name="Higgs M.R."/>
            <person name="Natsume T."/>
            <person name="Khan T."/>
            <person name="Martos-Moreno G.A."/>
            <person name="Chupp S."/>
            <person name="Mathew C.G."/>
            <person name="Parry D."/>
            <person name="Simpson M.A."/>
            <person name="Nahavandi N."/>
            <person name="Yueksel Z."/>
            <person name="Drasdo M."/>
            <person name="Kron A."/>
            <person name="Vogt P."/>
            <person name="Jonasson A."/>
            <person name="Seth S.A."/>
            <person name="Gonzaga-Jauregui C."/>
            <person name="Brigatti K.W."/>
            <person name="Stegmann A.P.A."/>
            <person name="Kanemaki M."/>
            <person name="Josifova D."/>
            <person name="Uchiyama Y."/>
            <person name="Oh Y."/>
            <person name="Morimoto A."/>
            <person name="Osaka H."/>
            <person name="Ammous Z."/>
            <person name="Argente J."/>
            <person name="Matsumoto N."/>
            <person name="Stumpel C.T.R.M."/>
            <person name="Taylor A.M.R."/>
            <person name="Jackson A.P."/>
            <person name="Bielinsky A.K."/>
            <person name="Mailand N."/>
            <person name="Le Caignec C."/>
            <person name="Davis E.E."/>
            <person name="Stewart G.S."/>
        </authorList>
    </citation>
    <scope>VARIANTS ATELS2 ARG-372 DEL; 425-ARG--SER-1101 DEL AND ASP-990</scope>
    <scope>INVOLVEMENT IN ATELS2</scope>
    <scope>CHARACTERIZATION OF VARIANTS ATELS2 ARG-372 DEL; 425-ARG--SER-1101 DEL AND ASP-990</scope>
    <scope>INTERACTION WITH SMC6; SLF2 AND NSMCE2</scope>
</reference>
<keyword id="KW-0067">ATP-binding</keyword>
<keyword id="KW-0131">Cell cycle</keyword>
<keyword id="KW-0132">Cell division</keyword>
<keyword id="KW-0158">Chromosome</keyword>
<keyword id="KW-0175">Coiled coil</keyword>
<keyword id="KW-0225">Disease variant</keyword>
<keyword id="KW-0227">DNA damage</keyword>
<keyword id="KW-0233">DNA recombination</keyword>
<keyword id="KW-0234">DNA repair</keyword>
<keyword id="KW-0498">Mitosis</keyword>
<keyword id="KW-0547">Nucleotide-binding</keyword>
<keyword id="KW-0539">Nucleus</keyword>
<keyword id="KW-0597">Phosphoprotein</keyword>
<keyword id="KW-1267">Proteomics identification</keyword>
<keyword id="KW-1185">Reference proteome</keyword>
<keyword id="KW-0779">Telomere</keyword>
<keyword id="KW-0832">Ubl conjugation</keyword>
<evidence type="ECO:0000250" key="1"/>
<evidence type="ECO:0000250" key="2">
    <source>
        <dbReference type="UniProtKB" id="Q8CG46"/>
    </source>
</evidence>
<evidence type="ECO:0000255" key="3"/>
<evidence type="ECO:0000256" key="4">
    <source>
        <dbReference type="SAM" id="MobiDB-lite"/>
    </source>
</evidence>
<evidence type="ECO:0000269" key="5">
    <source>
    </source>
</evidence>
<evidence type="ECO:0000269" key="6">
    <source>
    </source>
</evidence>
<evidence type="ECO:0000269" key="7">
    <source>
    </source>
</evidence>
<evidence type="ECO:0000269" key="8">
    <source>
    </source>
</evidence>
<evidence type="ECO:0000269" key="9">
    <source>
    </source>
</evidence>
<evidence type="ECO:0000269" key="10">
    <source>
    </source>
</evidence>
<evidence type="ECO:0000269" key="11">
    <source>
    </source>
</evidence>
<evidence type="ECO:0000269" key="12">
    <source>
    </source>
</evidence>
<evidence type="ECO:0000269" key="13">
    <source>
    </source>
</evidence>
<evidence type="ECO:0000269" key="14">
    <source>
    </source>
</evidence>
<evidence type="ECO:0000269" key="15">
    <source>
    </source>
</evidence>
<evidence type="ECO:0000269" key="16">
    <source>
    </source>
</evidence>
<evidence type="ECO:0000269" key="17">
    <source>
    </source>
</evidence>
<evidence type="ECO:0000305" key="18"/>
<evidence type="ECO:0007744" key="19">
    <source>
    </source>
</evidence>
<evidence type="ECO:0007744" key="20">
    <source>
    </source>
</evidence>
<evidence type="ECO:0007744" key="21">
    <source>
    </source>
</evidence>
<evidence type="ECO:0007744" key="22">
    <source>
    </source>
</evidence>